<keyword id="KW-0068">Autocatalytic cleavage</keyword>
<keyword id="KW-0963">Cytoplasm</keyword>
<keyword id="KW-0210">Decarboxylase</keyword>
<keyword id="KW-0456">Lyase</keyword>
<keyword id="KW-0566">Pantothenate biosynthesis</keyword>
<keyword id="KW-0670">Pyruvate</keyword>
<keyword id="KW-0704">Schiff base</keyword>
<keyword id="KW-0865">Zymogen</keyword>
<feature type="chain" id="PRO_0000307007" description="Aspartate 1-decarboxylase beta chain" evidence="1">
    <location>
        <begin position="1"/>
        <end position="24"/>
    </location>
</feature>
<feature type="chain" id="PRO_0000307008" description="Aspartate 1-decarboxylase alpha chain" evidence="1">
    <location>
        <begin position="25"/>
        <end position="127"/>
    </location>
</feature>
<feature type="active site" description="Schiff-base intermediate with substrate; via pyruvic acid" evidence="1">
    <location>
        <position position="25"/>
    </location>
</feature>
<feature type="active site" description="Proton donor" evidence="1">
    <location>
        <position position="58"/>
    </location>
</feature>
<feature type="binding site" evidence="1">
    <location>
        <position position="57"/>
    </location>
    <ligand>
        <name>substrate</name>
    </ligand>
</feature>
<feature type="binding site" evidence="1">
    <location>
        <begin position="73"/>
        <end position="75"/>
    </location>
    <ligand>
        <name>substrate</name>
    </ligand>
</feature>
<feature type="modified residue" description="Pyruvic acid (Ser)" evidence="1">
    <location>
        <position position="25"/>
    </location>
</feature>
<dbReference type="EC" id="4.1.1.11" evidence="1"/>
<dbReference type="EMBL" id="AM263198">
    <property type="protein sequence ID" value="CAK21337.1"/>
    <property type="molecule type" value="Genomic_DNA"/>
</dbReference>
<dbReference type="RefSeq" id="WP_011702685.1">
    <property type="nucleotide sequence ID" value="NC_008555.1"/>
</dbReference>
<dbReference type="SMR" id="A0AK05"/>
<dbReference type="STRING" id="386043.lwe1919"/>
<dbReference type="GeneID" id="61189821"/>
<dbReference type="KEGG" id="lwe:lwe1919"/>
<dbReference type="eggNOG" id="COG0853">
    <property type="taxonomic scope" value="Bacteria"/>
</dbReference>
<dbReference type="HOGENOM" id="CLU_115305_2_0_9"/>
<dbReference type="OrthoDB" id="9803983at2"/>
<dbReference type="UniPathway" id="UPA00028">
    <property type="reaction ID" value="UER00002"/>
</dbReference>
<dbReference type="Proteomes" id="UP000000779">
    <property type="component" value="Chromosome"/>
</dbReference>
<dbReference type="GO" id="GO:0005829">
    <property type="term" value="C:cytosol"/>
    <property type="evidence" value="ECO:0007669"/>
    <property type="project" value="TreeGrafter"/>
</dbReference>
<dbReference type="GO" id="GO:0004068">
    <property type="term" value="F:aspartate 1-decarboxylase activity"/>
    <property type="evidence" value="ECO:0007669"/>
    <property type="project" value="UniProtKB-UniRule"/>
</dbReference>
<dbReference type="GO" id="GO:0006523">
    <property type="term" value="P:alanine biosynthetic process"/>
    <property type="evidence" value="ECO:0007669"/>
    <property type="project" value="InterPro"/>
</dbReference>
<dbReference type="GO" id="GO:0015940">
    <property type="term" value="P:pantothenate biosynthetic process"/>
    <property type="evidence" value="ECO:0007669"/>
    <property type="project" value="UniProtKB-UniRule"/>
</dbReference>
<dbReference type="CDD" id="cd06919">
    <property type="entry name" value="Asp_decarbox"/>
    <property type="match status" value="1"/>
</dbReference>
<dbReference type="Gene3D" id="2.40.40.20">
    <property type="match status" value="1"/>
</dbReference>
<dbReference type="HAMAP" id="MF_00446">
    <property type="entry name" value="PanD"/>
    <property type="match status" value="1"/>
</dbReference>
<dbReference type="InterPro" id="IPR009010">
    <property type="entry name" value="Asp_de-COase-like_dom_sf"/>
</dbReference>
<dbReference type="InterPro" id="IPR003190">
    <property type="entry name" value="Asp_decarbox"/>
</dbReference>
<dbReference type="NCBIfam" id="TIGR00223">
    <property type="entry name" value="panD"/>
    <property type="match status" value="1"/>
</dbReference>
<dbReference type="PANTHER" id="PTHR21012">
    <property type="entry name" value="ASPARTATE 1-DECARBOXYLASE"/>
    <property type="match status" value="1"/>
</dbReference>
<dbReference type="PANTHER" id="PTHR21012:SF0">
    <property type="entry name" value="ASPARTATE 1-DECARBOXYLASE"/>
    <property type="match status" value="1"/>
</dbReference>
<dbReference type="Pfam" id="PF02261">
    <property type="entry name" value="Asp_decarbox"/>
    <property type="match status" value="1"/>
</dbReference>
<dbReference type="PIRSF" id="PIRSF006246">
    <property type="entry name" value="Asp_decarbox"/>
    <property type="match status" value="1"/>
</dbReference>
<dbReference type="SUPFAM" id="SSF50692">
    <property type="entry name" value="ADC-like"/>
    <property type="match status" value="1"/>
</dbReference>
<proteinExistence type="inferred from homology"/>
<name>PAND_LISW6</name>
<reference key="1">
    <citation type="journal article" date="2006" name="J. Bacteriol.">
        <title>Whole-genome sequence of Listeria welshimeri reveals common steps in genome reduction with Listeria innocua as compared to Listeria monocytogenes.</title>
        <authorList>
            <person name="Hain T."/>
            <person name="Steinweg C."/>
            <person name="Kuenne C.T."/>
            <person name="Billion A."/>
            <person name="Ghai R."/>
            <person name="Chatterjee S.S."/>
            <person name="Domann E."/>
            <person name="Kaerst U."/>
            <person name="Goesmann A."/>
            <person name="Bekel T."/>
            <person name="Bartels D."/>
            <person name="Kaiser O."/>
            <person name="Meyer F."/>
            <person name="Puehler A."/>
            <person name="Weisshaar B."/>
            <person name="Wehland J."/>
            <person name="Liang C."/>
            <person name="Dandekar T."/>
            <person name="Lampidis R."/>
            <person name="Kreft J."/>
            <person name="Goebel W."/>
            <person name="Chakraborty T."/>
        </authorList>
    </citation>
    <scope>NUCLEOTIDE SEQUENCE [LARGE SCALE GENOMIC DNA]</scope>
    <source>
        <strain>ATCC 35897 / DSM 20650 / CCUG 15529 / CIP 8149 / NCTC 11857 / SLCC 5334 / V8</strain>
    </source>
</reference>
<gene>
    <name evidence="1" type="primary">panD</name>
    <name type="ordered locus">lwe1919</name>
</gene>
<evidence type="ECO:0000255" key="1">
    <source>
        <dbReference type="HAMAP-Rule" id="MF_00446"/>
    </source>
</evidence>
<sequence>MFRTMMNGKIHRATVTEANLNYVGSITIDSAILEAVDMLPNEKVQIVNNNNGARIETYIIPGEPGSGVICLNGAAARHVQVGDVVIIMSYGMFTTEEANKHEPKIVVLDEKNHIEMILPEEKTHTTL</sequence>
<organism>
    <name type="scientific">Listeria welshimeri serovar 6b (strain ATCC 35897 / DSM 20650 / CCUG 15529 / CIP 8149 / NCTC 11857 / SLCC 5334 / V8)</name>
    <dbReference type="NCBI Taxonomy" id="386043"/>
    <lineage>
        <taxon>Bacteria</taxon>
        <taxon>Bacillati</taxon>
        <taxon>Bacillota</taxon>
        <taxon>Bacilli</taxon>
        <taxon>Bacillales</taxon>
        <taxon>Listeriaceae</taxon>
        <taxon>Listeria</taxon>
    </lineage>
</organism>
<accession>A0AK05</accession>
<comment type="function">
    <text evidence="1">Catalyzes the pyruvoyl-dependent decarboxylation of aspartate to produce beta-alanine.</text>
</comment>
<comment type="catalytic activity">
    <reaction evidence="1">
        <text>L-aspartate + H(+) = beta-alanine + CO2</text>
        <dbReference type="Rhea" id="RHEA:19497"/>
        <dbReference type="ChEBI" id="CHEBI:15378"/>
        <dbReference type="ChEBI" id="CHEBI:16526"/>
        <dbReference type="ChEBI" id="CHEBI:29991"/>
        <dbReference type="ChEBI" id="CHEBI:57966"/>
        <dbReference type="EC" id="4.1.1.11"/>
    </reaction>
</comment>
<comment type="cofactor">
    <cofactor evidence="1">
        <name>pyruvate</name>
        <dbReference type="ChEBI" id="CHEBI:15361"/>
    </cofactor>
    <text evidence="1">Binds 1 pyruvoyl group covalently per subunit.</text>
</comment>
<comment type="pathway">
    <text evidence="1">Cofactor biosynthesis; (R)-pantothenate biosynthesis; beta-alanine from L-aspartate: step 1/1.</text>
</comment>
<comment type="subunit">
    <text evidence="1">Heterooctamer of four alpha and four beta subunits.</text>
</comment>
<comment type="subcellular location">
    <subcellularLocation>
        <location evidence="1">Cytoplasm</location>
    </subcellularLocation>
</comment>
<comment type="PTM">
    <text evidence="1">Is synthesized initially as an inactive proenzyme, which is activated by self-cleavage at a specific serine bond to produce a beta-subunit with a hydroxyl group at its C-terminus and an alpha-subunit with a pyruvoyl group at its N-terminus.</text>
</comment>
<comment type="similarity">
    <text evidence="1">Belongs to the PanD family.</text>
</comment>
<protein>
    <recommendedName>
        <fullName evidence="1">Aspartate 1-decarboxylase</fullName>
        <ecNumber evidence="1">4.1.1.11</ecNumber>
    </recommendedName>
    <alternativeName>
        <fullName evidence="1">Aspartate alpha-decarboxylase</fullName>
    </alternativeName>
    <component>
        <recommendedName>
            <fullName evidence="1">Aspartate 1-decarboxylase beta chain</fullName>
        </recommendedName>
    </component>
    <component>
        <recommendedName>
            <fullName evidence="1">Aspartate 1-decarboxylase alpha chain</fullName>
        </recommendedName>
    </component>
</protein>